<feature type="signal peptide" description="Tat-type signal" evidence="1">
    <location>
        <begin position="1"/>
        <end position="31"/>
    </location>
</feature>
<feature type="chain" id="PRO_1000186360" description="Periplasmic nitrate reductase" evidence="1">
    <location>
        <begin position="32"/>
        <end position="828"/>
    </location>
</feature>
<feature type="domain" description="4Fe-4S Mo/W bis-MGD-type" evidence="1">
    <location>
        <begin position="39"/>
        <end position="95"/>
    </location>
</feature>
<feature type="binding site" evidence="1">
    <location>
        <position position="46"/>
    </location>
    <ligand>
        <name>[4Fe-4S] cluster</name>
        <dbReference type="ChEBI" id="CHEBI:49883"/>
    </ligand>
</feature>
<feature type="binding site" evidence="1">
    <location>
        <position position="49"/>
    </location>
    <ligand>
        <name>[4Fe-4S] cluster</name>
        <dbReference type="ChEBI" id="CHEBI:49883"/>
    </ligand>
</feature>
<feature type="binding site" evidence="1">
    <location>
        <position position="53"/>
    </location>
    <ligand>
        <name>[4Fe-4S] cluster</name>
        <dbReference type="ChEBI" id="CHEBI:49883"/>
    </ligand>
</feature>
<feature type="binding site" evidence="1">
    <location>
        <position position="81"/>
    </location>
    <ligand>
        <name>[4Fe-4S] cluster</name>
        <dbReference type="ChEBI" id="CHEBI:49883"/>
    </ligand>
</feature>
<feature type="binding site" evidence="1">
    <location>
        <position position="83"/>
    </location>
    <ligand>
        <name>Mo-bis(molybdopterin guanine dinucleotide)</name>
        <dbReference type="ChEBI" id="CHEBI:60539"/>
    </ligand>
</feature>
<feature type="binding site" evidence="1">
    <location>
        <position position="150"/>
    </location>
    <ligand>
        <name>Mo-bis(molybdopterin guanine dinucleotide)</name>
        <dbReference type="ChEBI" id="CHEBI:60539"/>
    </ligand>
</feature>
<feature type="binding site" evidence="1">
    <location>
        <position position="175"/>
    </location>
    <ligand>
        <name>Mo-bis(molybdopterin guanine dinucleotide)</name>
        <dbReference type="ChEBI" id="CHEBI:60539"/>
    </ligand>
</feature>
<feature type="binding site" evidence="1">
    <location>
        <position position="179"/>
    </location>
    <ligand>
        <name>Mo-bis(molybdopterin guanine dinucleotide)</name>
        <dbReference type="ChEBI" id="CHEBI:60539"/>
    </ligand>
</feature>
<feature type="binding site" evidence="1">
    <location>
        <begin position="212"/>
        <end position="219"/>
    </location>
    <ligand>
        <name>Mo-bis(molybdopterin guanine dinucleotide)</name>
        <dbReference type="ChEBI" id="CHEBI:60539"/>
    </ligand>
</feature>
<feature type="binding site" evidence="1">
    <location>
        <begin position="243"/>
        <end position="247"/>
    </location>
    <ligand>
        <name>Mo-bis(molybdopterin guanine dinucleotide)</name>
        <dbReference type="ChEBI" id="CHEBI:60539"/>
    </ligand>
</feature>
<feature type="binding site" evidence="1">
    <location>
        <begin position="262"/>
        <end position="264"/>
    </location>
    <ligand>
        <name>Mo-bis(molybdopterin guanine dinucleotide)</name>
        <dbReference type="ChEBI" id="CHEBI:60539"/>
    </ligand>
</feature>
<feature type="binding site" evidence="1">
    <location>
        <position position="372"/>
    </location>
    <ligand>
        <name>Mo-bis(molybdopterin guanine dinucleotide)</name>
        <dbReference type="ChEBI" id="CHEBI:60539"/>
    </ligand>
</feature>
<feature type="binding site" evidence="1">
    <location>
        <position position="376"/>
    </location>
    <ligand>
        <name>Mo-bis(molybdopterin guanine dinucleotide)</name>
        <dbReference type="ChEBI" id="CHEBI:60539"/>
    </ligand>
</feature>
<feature type="binding site" evidence="1">
    <location>
        <position position="482"/>
    </location>
    <ligand>
        <name>Mo-bis(molybdopterin guanine dinucleotide)</name>
        <dbReference type="ChEBI" id="CHEBI:60539"/>
    </ligand>
</feature>
<feature type="binding site" evidence="1">
    <location>
        <begin position="508"/>
        <end position="509"/>
    </location>
    <ligand>
        <name>Mo-bis(molybdopterin guanine dinucleotide)</name>
        <dbReference type="ChEBI" id="CHEBI:60539"/>
    </ligand>
</feature>
<feature type="binding site" evidence="1">
    <location>
        <position position="531"/>
    </location>
    <ligand>
        <name>Mo-bis(molybdopterin guanine dinucleotide)</name>
        <dbReference type="ChEBI" id="CHEBI:60539"/>
    </ligand>
</feature>
<feature type="binding site" evidence="1">
    <location>
        <position position="558"/>
    </location>
    <ligand>
        <name>Mo-bis(molybdopterin guanine dinucleotide)</name>
        <dbReference type="ChEBI" id="CHEBI:60539"/>
    </ligand>
</feature>
<feature type="binding site" evidence="1">
    <location>
        <begin position="718"/>
        <end position="727"/>
    </location>
    <ligand>
        <name>Mo-bis(molybdopterin guanine dinucleotide)</name>
        <dbReference type="ChEBI" id="CHEBI:60539"/>
    </ligand>
</feature>
<feature type="binding site" evidence="1">
    <location>
        <position position="794"/>
    </location>
    <ligand>
        <name>substrate</name>
    </ligand>
</feature>
<feature type="binding site" evidence="1">
    <location>
        <position position="802"/>
    </location>
    <ligand>
        <name>Mo-bis(molybdopterin guanine dinucleotide)</name>
        <dbReference type="ChEBI" id="CHEBI:60539"/>
    </ligand>
</feature>
<feature type="binding site" evidence="1">
    <location>
        <position position="819"/>
    </location>
    <ligand>
        <name>Mo-bis(molybdopterin guanine dinucleotide)</name>
        <dbReference type="ChEBI" id="CHEBI:60539"/>
    </ligand>
</feature>
<accession>B1X8A2</accession>
<comment type="function">
    <text evidence="1">Catalytic subunit of the periplasmic nitrate reductase complex NapAB. Receives electrons from NapB and catalyzes the reduction of nitrate to nitrite.</text>
</comment>
<comment type="catalytic activity">
    <reaction evidence="1">
        <text>2 Fe(II)-[cytochrome] + nitrate + 2 H(+) = 2 Fe(III)-[cytochrome] + nitrite + H2O</text>
        <dbReference type="Rhea" id="RHEA:12909"/>
        <dbReference type="Rhea" id="RHEA-COMP:11777"/>
        <dbReference type="Rhea" id="RHEA-COMP:11778"/>
        <dbReference type="ChEBI" id="CHEBI:15377"/>
        <dbReference type="ChEBI" id="CHEBI:15378"/>
        <dbReference type="ChEBI" id="CHEBI:16301"/>
        <dbReference type="ChEBI" id="CHEBI:17632"/>
        <dbReference type="ChEBI" id="CHEBI:29033"/>
        <dbReference type="ChEBI" id="CHEBI:29034"/>
        <dbReference type="EC" id="1.9.6.1"/>
    </reaction>
</comment>
<comment type="cofactor">
    <cofactor evidence="1">
        <name>[4Fe-4S] cluster</name>
        <dbReference type="ChEBI" id="CHEBI:49883"/>
    </cofactor>
    <text evidence="1">Binds 1 [4Fe-4S] cluster.</text>
</comment>
<comment type="cofactor">
    <cofactor evidence="1">
        <name>Mo-bis(molybdopterin guanine dinucleotide)</name>
        <dbReference type="ChEBI" id="CHEBI:60539"/>
    </cofactor>
    <text evidence="1">Binds 1 molybdenum-bis(molybdopterin guanine dinucleotide) (Mo-bis-MGD) cofactor per subunit.</text>
</comment>
<comment type="subunit">
    <text evidence="1">Component of the periplasmic nitrate reductase NapAB complex composed of NapA and NapB.</text>
</comment>
<comment type="subcellular location">
    <subcellularLocation>
        <location evidence="1">Periplasm</location>
    </subcellularLocation>
</comment>
<comment type="PTM">
    <text evidence="1">Predicted to be exported by the Tat system. The position of the signal peptide cleavage has not been experimentally proven.</text>
</comment>
<comment type="similarity">
    <text evidence="1">Belongs to the prokaryotic molybdopterin-containing oxidoreductase family. NasA/NapA/NarB subfamily.</text>
</comment>
<evidence type="ECO:0000255" key="1">
    <source>
        <dbReference type="HAMAP-Rule" id="MF_01630"/>
    </source>
</evidence>
<proteinExistence type="inferred from homology"/>
<name>NAPA_ECODH</name>
<keyword id="KW-0004">4Fe-4S</keyword>
<keyword id="KW-0249">Electron transport</keyword>
<keyword id="KW-0408">Iron</keyword>
<keyword id="KW-0411">Iron-sulfur</keyword>
<keyword id="KW-0479">Metal-binding</keyword>
<keyword id="KW-0500">Molybdenum</keyword>
<keyword id="KW-0534">Nitrate assimilation</keyword>
<keyword id="KW-0560">Oxidoreductase</keyword>
<keyword id="KW-0574">Periplasm</keyword>
<keyword id="KW-0732">Signal</keyword>
<keyword id="KW-0813">Transport</keyword>
<organism>
    <name type="scientific">Escherichia coli (strain K12 / DH10B)</name>
    <dbReference type="NCBI Taxonomy" id="316385"/>
    <lineage>
        <taxon>Bacteria</taxon>
        <taxon>Pseudomonadati</taxon>
        <taxon>Pseudomonadota</taxon>
        <taxon>Gammaproteobacteria</taxon>
        <taxon>Enterobacterales</taxon>
        <taxon>Enterobacteriaceae</taxon>
        <taxon>Escherichia</taxon>
    </lineage>
</organism>
<protein>
    <recommendedName>
        <fullName evidence="1">Periplasmic nitrate reductase</fullName>
        <ecNumber evidence="1">1.9.6.1</ecNumber>
    </recommendedName>
</protein>
<dbReference type="EC" id="1.9.6.1" evidence="1"/>
<dbReference type="EMBL" id="CP000948">
    <property type="protein sequence ID" value="ACB03368.1"/>
    <property type="molecule type" value="Genomic_DNA"/>
</dbReference>
<dbReference type="RefSeq" id="WP_000778061.1">
    <property type="nucleotide sequence ID" value="NC_010473.1"/>
</dbReference>
<dbReference type="SMR" id="B1X8A2"/>
<dbReference type="KEGG" id="ecd:ECDH10B_2363"/>
<dbReference type="HOGENOM" id="CLU_000422_13_4_6"/>
<dbReference type="GO" id="GO:0016020">
    <property type="term" value="C:membrane"/>
    <property type="evidence" value="ECO:0007669"/>
    <property type="project" value="TreeGrafter"/>
</dbReference>
<dbReference type="GO" id="GO:0009325">
    <property type="term" value="C:nitrate reductase complex"/>
    <property type="evidence" value="ECO:0007669"/>
    <property type="project" value="TreeGrafter"/>
</dbReference>
<dbReference type="GO" id="GO:0042597">
    <property type="term" value="C:periplasmic space"/>
    <property type="evidence" value="ECO:0007669"/>
    <property type="project" value="UniProtKB-SubCell"/>
</dbReference>
<dbReference type="GO" id="GO:0051539">
    <property type="term" value="F:4 iron, 4 sulfur cluster binding"/>
    <property type="evidence" value="ECO:0007669"/>
    <property type="project" value="UniProtKB-KW"/>
</dbReference>
<dbReference type="GO" id="GO:0009055">
    <property type="term" value="F:electron transfer activity"/>
    <property type="evidence" value="ECO:0007669"/>
    <property type="project" value="UniProtKB-UniRule"/>
</dbReference>
<dbReference type="GO" id="GO:0005506">
    <property type="term" value="F:iron ion binding"/>
    <property type="evidence" value="ECO:0007669"/>
    <property type="project" value="UniProtKB-UniRule"/>
</dbReference>
<dbReference type="GO" id="GO:0030151">
    <property type="term" value="F:molybdenum ion binding"/>
    <property type="evidence" value="ECO:0007669"/>
    <property type="project" value="InterPro"/>
</dbReference>
<dbReference type="GO" id="GO:0043546">
    <property type="term" value="F:molybdopterin cofactor binding"/>
    <property type="evidence" value="ECO:0007669"/>
    <property type="project" value="InterPro"/>
</dbReference>
<dbReference type="GO" id="GO:0050140">
    <property type="term" value="F:nitrate reductase (cytochrome) activity"/>
    <property type="evidence" value="ECO:0007669"/>
    <property type="project" value="UniProtKB-EC"/>
</dbReference>
<dbReference type="GO" id="GO:0045333">
    <property type="term" value="P:cellular respiration"/>
    <property type="evidence" value="ECO:0007669"/>
    <property type="project" value="UniProtKB-ARBA"/>
</dbReference>
<dbReference type="GO" id="GO:0006777">
    <property type="term" value="P:Mo-molybdopterin cofactor biosynthetic process"/>
    <property type="evidence" value="ECO:0007669"/>
    <property type="project" value="UniProtKB-UniRule"/>
</dbReference>
<dbReference type="GO" id="GO:0042128">
    <property type="term" value="P:nitrate assimilation"/>
    <property type="evidence" value="ECO:0007669"/>
    <property type="project" value="UniProtKB-UniRule"/>
</dbReference>
<dbReference type="CDD" id="cd02791">
    <property type="entry name" value="MopB_CT_Nitrate-R-NapA-like"/>
    <property type="match status" value="1"/>
</dbReference>
<dbReference type="CDD" id="cd02754">
    <property type="entry name" value="MopB_Nitrate-R-NapA-like"/>
    <property type="match status" value="1"/>
</dbReference>
<dbReference type="FunFam" id="2.40.40.20:FF:000005">
    <property type="entry name" value="Periplasmic nitrate reductase"/>
    <property type="match status" value="1"/>
</dbReference>
<dbReference type="FunFam" id="3.40.228.10:FF:000001">
    <property type="entry name" value="Periplasmic nitrate reductase"/>
    <property type="match status" value="1"/>
</dbReference>
<dbReference type="Gene3D" id="2.40.40.20">
    <property type="match status" value="1"/>
</dbReference>
<dbReference type="Gene3D" id="3.30.200.210">
    <property type="match status" value="1"/>
</dbReference>
<dbReference type="Gene3D" id="3.40.50.740">
    <property type="match status" value="1"/>
</dbReference>
<dbReference type="Gene3D" id="3.40.228.10">
    <property type="entry name" value="Dimethylsulfoxide Reductase, domain 2"/>
    <property type="match status" value="1"/>
</dbReference>
<dbReference type="HAMAP" id="MF_01630">
    <property type="entry name" value="Nitrate_reduct_NapA"/>
    <property type="match status" value="1"/>
</dbReference>
<dbReference type="InterPro" id="IPR009010">
    <property type="entry name" value="Asp_de-COase-like_dom_sf"/>
</dbReference>
<dbReference type="InterPro" id="IPR041957">
    <property type="entry name" value="CT_Nitrate-R-NapA-like"/>
</dbReference>
<dbReference type="InterPro" id="IPR006657">
    <property type="entry name" value="MoPterin_dinucl-bd_dom"/>
</dbReference>
<dbReference type="InterPro" id="IPR006656">
    <property type="entry name" value="Mopterin_OxRdtase"/>
</dbReference>
<dbReference type="InterPro" id="IPR006963">
    <property type="entry name" value="Mopterin_OxRdtase_4Fe-4S_dom"/>
</dbReference>
<dbReference type="InterPro" id="IPR027467">
    <property type="entry name" value="MopterinOxRdtase_cofactor_BS"/>
</dbReference>
<dbReference type="InterPro" id="IPR010051">
    <property type="entry name" value="Periplasm_NO3_reductase_lsu"/>
</dbReference>
<dbReference type="InterPro" id="IPR050123">
    <property type="entry name" value="Prok_molybdopt-oxidoreductase"/>
</dbReference>
<dbReference type="InterPro" id="IPR006311">
    <property type="entry name" value="TAT_signal"/>
</dbReference>
<dbReference type="InterPro" id="IPR019546">
    <property type="entry name" value="TAT_signal_bac_arc"/>
</dbReference>
<dbReference type="NCBIfam" id="TIGR01706">
    <property type="entry name" value="NAPA"/>
    <property type="match status" value="1"/>
</dbReference>
<dbReference type="NCBIfam" id="NF010055">
    <property type="entry name" value="PRK13532.1"/>
    <property type="match status" value="1"/>
</dbReference>
<dbReference type="NCBIfam" id="TIGR01409">
    <property type="entry name" value="TAT_signal_seq"/>
    <property type="match status" value="1"/>
</dbReference>
<dbReference type="PANTHER" id="PTHR43105:SF11">
    <property type="entry name" value="PERIPLASMIC NITRATE REDUCTASE"/>
    <property type="match status" value="1"/>
</dbReference>
<dbReference type="PANTHER" id="PTHR43105">
    <property type="entry name" value="RESPIRATORY NITRATE REDUCTASE"/>
    <property type="match status" value="1"/>
</dbReference>
<dbReference type="Pfam" id="PF04879">
    <property type="entry name" value="Molybdop_Fe4S4"/>
    <property type="match status" value="1"/>
</dbReference>
<dbReference type="Pfam" id="PF00384">
    <property type="entry name" value="Molybdopterin"/>
    <property type="match status" value="1"/>
</dbReference>
<dbReference type="Pfam" id="PF01568">
    <property type="entry name" value="Molydop_binding"/>
    <property type="match status" value="1"/>
</dbReference>
<dbReference type="SMART" id="SM00926">
    <property type="entry name" value="Molybdop_Fe4S4"/>
    <property type="match status" value="1"/>
</dbReference>
<dbReference type="SUPFAM" id="SSF50692">
    <property type="entry name" value="ADC-like"/>
    <property type="match status" value="1"/>
</dbReference>
<dbReference type="SUPFAM" id="SSF53706">
    <property type="entry name" value="Formate dehydrogenase/DMSO reductase, domains 1-3"/>
    <property type="match status" value="1"/>
</dbReference>
<dbReference type="PROSITE" id="PS51669">
    <property type="entry name" value="4FE4S_MOW_BIS_MGD"/>
    <property type="match status" value="1"/>
</dbReference>
<dbReference type="PROSITE" id="PS00551">
    <property type="entry name" value="MOLYBDOPTERIN_PROK_1"/>
    <property type="match status" value="1"/>
</dbReference>
<dbReference type="PROSITE" id="PS51318">
    <property type="entry name" value="TAT"/>
    <property type="match status" value="1"/>
</dbReference>
<gene>
    <name evidence="1" type="primary">napA</name>
    <name type="ordered locus">ECDH10B_2363</name>
</gene>
<reference key="1">
    <citation type="journal article" date="2008" name="J. Bacteriol.">
        <title>The complete genome sequence of Escherichia coli DH10B: insights into the biology of a laboratory workhorse.</title>
        <authorList>
            <person name="Durfee T."/>
            <person name="Nelson R."/>
            <person name="Baldwin S."/>
            <person name="Plunkett G. III"/>
            <person name="Burland V."/>
            <person name="Mau B."/>
            <person name="Petrosino J.F."/>
            <person name="Qin X."/>
            <person name="Muzny D.M."/>
            <person name="Ayele M."/>
            <person name="Gibbs R.A."/>
            <person name="Csorgo B."/>
            <person name="Posfai G."/>
            <person name="Weinstock G.M."/>
            <person name="Blattner F.R."/>
        </authorList>
    </citation>
    <scope>NUCLEOTIDE SEQUENCE [LARGE SCALE GENOMIC DNA]</scope>
    <source>
        <strain>K12 / DH10B</strain>
    </source>
</reference>
<sequence>MKLSRRSFMKANAVAAAAAAAGLSVPGVARAVVGQQEAIKWDKAPCRFCGTGCGVLVGTQQGRVVACQGDPDAPVNRGLNCIKGYFLPKIMYGKDRLTQPLLRMKNGKYDKEGEFTPITWDQAFDVMEEKFKTALKEKGPESIGMFGSGQWTIWEGYAASKLFKAGFRSNNIDPNARHCMASAVVGFMRTFGMDEPMGCYDDIEQADAFVLWGANMAEMHPILWSRITNRRLSNQNVTVAVLSTYQHRSFELADNGIIFTPQSDLVILNYIANYIIQNNAINQDFFSKHVNLRKGATDIGYGLRPTHPLEKAAKNPGSDASEPMSFEDYKAFVAEYTLEKTAEMTGVPKDQLEQLAQLYADPNKKVISYWTMGFNQHTRGVWANNLVYNLHLLTGKISQPGCGPFSLTGQPSACGTAREVGTFAHRLPADMVVTNEKHRDICEKKWNIPSGTIPAKIGLHAVAQDRALKDGKLNVYWTMCTNNMQAGPNINEERMPGWRDPRNFIIVSDPYPTVSALAADLILPTAMWVEKEGAYGNAERRTQFWRQQVQAPGEAKSDLWQLVQFSRRFKTEEVWPEDLLAKKPELRGKTLYEVLYATPEVSKFPVSELAEDQLNDESRELGFYLQKGLFEEYAWFGRGHGHDLAPFDDYHKARGLRWPVVNGKETQWRYSEGNDPYVKAGEGYKFYGKPDGKAVIFALPFEPAAEAPDEEYDLWLSTGRVLEHWHTGSMTRRVPELHRAFPEAVLFIHPLDAKARDLRRGDKVKVVSRRGEVISIVETRGRNRPPQGLVYMPFFDAAQLVNKLTLDATDPLSKETDFKKCAVKLEKV</sequence>